<comment type="function">
    <text evidence="1">Specifically dimethylates two adjacent adenosines (A1518 and A1519) in the loop of a conserved hairpin near the 3'-end of 16S rRNA in the 30S particle. May play a critical role in biogenesis of 30S subunits.</text>
</comment>
<comment type="catalytic activity">
    <reaction evidence="1">
        <text>adenosine(1518)/adenosine(1519) in 16S rRNA + 4 S-adenosyl-L-methionine = N(6)-dimethyladenosine(1518)/N(6)-dimethyladenosine(1519) in 16S rRNA + 4 S-adenosyl-L-homocysteine + 4 H(+)</text>
        <dbReference type="Rhea" id="RHEA:19609"/>
        <dbReference type="Rhea" id="RHEA-COMP:10232"/>
        <dbReference type="Rhea" id="RHEA-COMP:10233"/>
        <dbReference type="ChEBI" id="CHEBI:15378"/>
        <dbReference type="ChEBI" id="CHEBI:57856"/>
        <dbReference type="ChEBI" id="CHEBI:59789"/>
        <dbReference type="ChEBI" id="CHEBI:74411"/>
        <dbReference type="ChEBI" id="CHEBI:74493"/>
        <dbReference type="EC" id="2.1.1.182"/>
    </reaction>
</comment>
<comment type="subcellular location">
    <subcellularLocation>
        <location evidence="1">Cytoplasm</location>
    </subcellularLocation>
</comment>
<comment type="similarity">
    <text evidence="1">Belongs to the class I-like SAM-binding methyltransferase superfamily. rRNA adenine N(6)-methyltransferase family. RsmA subfamily.</text>
</comment>
<name>RSMA_PROMM</name>
<evidence type="ECO:0000255" key="1">
    <source>
        <dbReference type="HAMAP-Rule" id="MF_00607"/>
    </source>
</evidence>
<sequence>MAFSGHHARKRFAQHWLIDAAVLTQILDAADVQPDDRLLEVGPGRGALTERLLASSASAVHAVELDRDLVSGLKQRFADQARFSLQEGDVLSVPLTLADGRAATKVVANIPYNITGPLLERLLGRLDRPVDHPYQRLVLLLQKEVAQRIRALPGQSCFSALSVRLQLLARCTTVCPVPPRSFKPPPKVHSEVILIEPLAPEQRLEPLLAKRVESLLRQAFLARRKMLRNTLAKVLPAAELNALADDLGISLQQRPQELSPATWVELARGLNRADLVDPEP</sequence>
<proteinExistence type="inferred from homology"/>
<feature type="chain" id="PRO_0000101584" description="Ribosomal RNA small subunit methyltransferase A">
    <location>
        <begin position="1"/>
        <end position="280"/>
    </location>
</feature>
<feature type="binding site" evidence="1">
    <location>
        <position position="15"/>
    </location>
    <ligand>
        <name>S-adenosyl-L-methionine</name>
        <dbReference type="ChEBI" id="CHEBI:59789"/>
    </ligand>
</feature>
<feature type="binding site" evidence="1">
    <location>
        <position position="17"/>
    </location>
    <ligand>
        <name>S-adenosyl-L-methionine</name>
        <dbReference type="ChEBI" id="CHEBI:59789"/>
    </ligand>
</feature>
<feature type="binding site" evidence="1">
    <location>
        <position position="42"/>
    </location>
    <ligand>
        <name>S-adenosyl-L-methionine</name>
        <dbReference type="ChEBI" id="CHEBI:59789"/>
    </ligand>
</feature>
<feature type="binding site" evidence="1">
    <location>
        <position position="64"/>
    </location>
    <ligand>
        <name>S-adenosyl-L-methionine</name>
        <dbReference type="ChEBI" id="CHEBI:59789"/>
    </ligand>
</feature>
<feature type="binding site" evidence="1">
    <location>
        <position position="89"/>
    </location>
    <ligand>
        <name>S-adenosyl-L-methionine</name>
        <dbReference type="ChEBI" id="CHEBI:59789"/>
    </ligand>
</feature>
<feature type="binding site" evidence="1">
    <location>
        <position position="109"/>
    </location>
    <ligand>
        <name>S-adenosyl-L-methionine</name>
        <dbReference type="ChEBI" id="CHEBI:59789"/>
    </ligand>
</feature>
<organism>
    <name type="scientific">Prochlorococcus marinus (strain MIT 9313)</name>
    <dbReference type="NCBI Taxonomy" id="74547"/>
    <lineage>
        <taxon>Bacteria</taxon>
        <taxon>Bacillati</taxon>
        <taxon>Cyanobacteriota</taxon>
        <taxon>Cyanophyceae</taxon>
        <taxon>Synechococcales</taxon>
        <taxon>Prochlorococcaceae</taxon>
        <taxon>Prochlorococcus</taxon>
    </lineage>
</organism>
<keyword id="KW-0963">Cytoplasm</keyword>
<keyword id="KW-0489">Methyltransferase</keyword>
<keyword id="KW-1185">Reference proteome</keyword>
<keyword id="KW-0694">RNA-binding</keyword>
<keyword id="KW-0698">rRNA processing</keyword>
<keyword id="KW-0949">S-adenosyl-L-methionine</keyword>
<keyword id="KW-0808">Transferase</keyword>
<gene>
    <name evidence="1" type="primary">rsmA</name>
    <name evidence="1" type="synonym">ksgA</name>
    <name type="ordered locus">PMT_0621</name>
</gene>
<reference key="1">
    <citation type="journal article" date="2003" name="Nature">
        <title>Genome divergence in two Prochlorococcus ecotypes reflects oceanic niche differentiation.</title>
        <authorList>
            <person name="Rocap G."/>
            <person name="Larimer F.W."/>
            <person name="Lamerdin J.E."/>
            <person name="Malfatti S."/>
            <person name="Chain P."/>
            <person name="Ahlgren N.A."/>
            <person name="Arellano A."/>
            <person name="Coleman M."/>
            <person name="Hauser L."/>
            <person name="Hess W.R."/>
            <person name="Johnson Z.I."/>
            <person name="Land M.L."/>
            <person name="Lindell D."/>
            <person name="Post A.F."/>
            <person name="Regala W."/>
            <person name="Shah M."/>
            <person name="Shaw S.L."/>
            <person name="Steglich C."/>
            <person name="Sullivan M.B."/>
            <person name="Ting C.S."/>
            <person name="Tolonen A."/>
            <person name="Webb E.A."/>
            <person name="Zinser E.R."/>
            <person name="Chisholm S.W."/>
        </authorList>
    </citation>
    <scope>NUCLEOTIDE SEQUENCE [LARGE SCALE GENOMIC DNA]</scope>
    <source>
        <strain>MIT 9313</strain>
    </source>
</reference>
<accession>Q7V7W0</accession>
<dbReference type="EC" id="2.1.1.182" evidence="1"/>
<dbReference type="EMBL" id="BX548175">
    <property type="protein sequence ID" value="CAE20796.1"/>
    <property type="molecule type" value="Genomic_DNA"/>
</dbReference>
<dbReference type="RefSeq" id="WP_011130000.1">
    <property type="nucleotide sequence ID" value="NC_005071.1"/>
</dbReference>
<dbReference type="SMR" id="Q7V7W0"/>
<dbReference type="KEGG" id="pmt:PMT_0621"/>
<dbReference type="eggNOG" id="COG0030">
    <property type="taxonomic scope" value="Bacteria"/>
</dbReference>
<dbReference type="HOGENOM" id="CLU_041220_0_1_3"/>
<dbReference type="OrthoDB" id="9814755at2"/>
<dbReference type="Proteomes" id="UP000001423">
    <property type="component" value="Chromosome"/>
</dbReference>
<dbReference type="GO" id="GO:0005829">
    <property type="term" value="C:cytosol"/>
    <property type="evidence" value="ECO:0007669"/>
    <property type="project" value="TreeGrafter"/>
</dbReference>
<dbReference type="GO" id="GO:0052908">
    <property type="term" value="F:16S rRNA (adenine(1518)-N(6)/adenine(1519)-N(6))-dimethyltransferase activity"/>
    <property type="evidence" value="ECO:0007669"/>
    <property type="project" value="UniProtKB-EC"/>
</dbReference>
<dbReference type="GO" id="GO:0003723">
    <property type="term" value="F:RNA binding"/>
    <property type="evidence" value="ECO:0007669"/>
    <property type="project" value="UniProtKB-KW"/>
</dbReference>
<dbReference type="CDD" id="cd02440">
    <property type="entry name" value="AdoMet_MTases"/>
    <property type="match status" value="1"/>
</dbReference>
<dbReference type="Gene3D" id="1.10.8.100">
    <property type="entry name" value="Ribosomal RNA adenine dimethylase-like, domain 2"/>
    <property type="match status" value="1"/>
</dbReference>
<dbReference type="Gene3D" id="3.40.50.150">
    <property type="entry name" value="Vaccinia Virus protein VP39"/>
    <property type="match status" value="1"/>
</dbReference>
<dbReference type="HAMAP" id="MF_00607">
    <property type="entry name" value="16SrRNA_methyltr_A"/>
    <property type="match status" value="1"/>
</dbReference>
<dbReference type="InterPro" id="IPR001737">
    <property type="entry name" value="KsgA/Erm"/>
</dbReference>
<dbReference type="InterPro" id="IPR023165">
    <property type="entry name" value="rRNA_Ade_diMease-like_C"/>
</dbReference>
<dbReference type="InterPro" id="IPR020596">
    <property type="entry name" value="rRNA_Ade_Mease_Trfase_CS"/>
</dbReference>
<dbReference type="InterPro" id="IPR020598">
    <property type="entry name" value="rRNA_Ade_methylase_Trfase_N"/>
</dbReference>
<dbReference type="InterPro" id="IPR011530">
    <property type="entry name" value="rRNA_adenine_dimethylase"/>
</dbReference>
<dbReference type="InterPro" id="IPR029063">
    <property type="entry name" value="SAM-dependent_MTases_sf"/>
</dbReference>
<dbReference type="NCBIfam" id="TIGR00755">
    <property type="entry name" value="ksgA"/>
    <property type="match status" value="1"/>
</dbReference>
<dbReference type="PANTHER" id="PTHR11727">
    <property type="entry name" value="DIMETHYLADENOSINE TRANSFERASE"/>
    <property type="match status" value="1"/>
</dbReference>
<dbReference type="PANTHER" id="PTHR11727:SF7">
    <property type="entry name" value="DIMETHYLADENOSINE TRANSFERASE-RELATED"/>
    <property type="match status" value="1"/>
</dbReference>
<dbReference type="Pfam" id="PF00398">
    <property type="entry name" value="RrnaAD"/>
    <property type="match status" value="1"/>
</dbReference>
<dbReference type="SMART" id="SM00650">
    <property type="entry name" value="rADc"/>
    <property type="match status" value="1"/>
</dbReference>
<dbReference type="SUPFAM" id="SSF53335">
    <property type="entry name" value="S-adenosyl-L-methionine-dependent methyltransferases"/>
    <property type="match status" value="1"/>
</dbReference>
<dbReference type="PROSITE" id="PS01131">
    <property type="entry name" value="RRNA_A_DIMETH"/>
    <property type="match status" value="1"/>
</dbReference>
<dbReference type="PROSITE" id="PS51689">
    <property type="entry name" value="SAM_RNA_A_N6_MT"/>
    <property type="match status" value="1"/>
</dbReference>
<protein>
    <recommendedName>
        <fullName evidence="1">Ribosomal RNA small subunit methyltransferase A</fullName>
        <ecNumber evidence="1">2.1.1.182</ecNumber>
    </recommendedName>
    <alternativeName>
        <fullName evidence="1">16S rRNA (adenine(1518)-N(6)/adenine(1519)-N(6))-dimethyltransferase</fullName>
    </alternativeName>
    <alternativeName>
        <fullName evidence="1">16S rRNA dimethyladenosine transferase</fullName>
    </alternativeName>
    <alternativeName>
        <fullName evidence="1">16S rRNA dimethylase</fullName>
    </alternativeName>
    <alternativeName>
        <fullName evidence="1">S-adenosylmethionine-6-N', N'-adenosyl(rRNA) dimethyltransferase</fullName>
    </alternativeName>
</protein>